<keyword id="KW-0450">Lipoyl</keyword>
<reference key="1">
    <citation type="journal article" date="2003" name="Mol. Microbiol.">
        <title>An integrated analysis of the genome of the hyperthermophilic archaeon Pyrococcus abyssi.</title>
        <authorList>
            <person name="Cohen G.N."/>
            <person name="Barbe V."/>
            <person name="Flament D."/>
            <person name="Galperin M."/>
            <person name="Heilig R."/>
            <person name="Lecompte O."/>
            <person name="Poch O."/>
            <person name="Prieur D."/>
            <person name="Querellou J."/>
            <person name="Ripp R."/>
            <person name="Thierry J.-C."/>
            <person name="Van der Oost J."/>
            <person name="Weissenbach J."/>
            <person name="Zivanovic Y."/>
            <person name="Forterre P."/>
        </authorList>
    </citation>
    <scope>NUCLEOTIDE SEQUENCE [LARGE SCALE GENOMIC DNA]</scope>
    <source>
        <strain>GE5 / Orsay</strain>
    </source>
</reference>
<reference key="2">
    <citation type="journal article" date="2012" name="Curr. Microbiol.">
        <title>Re-annotation of two hyperthermophilic archaea Pyrococcus abyssi GE5 and Pyrococcus furiosus DSM 3638.</title>
        <authorList>
            <person name="Gao J."/>
            <person name="Wang J."/>
        </authorList>
    </citation>
    <scope>GENOME REANNOTATION</scope>
    <source>
        <strain>GE5 / Orsay</strain>
    </source>
</reference>
<accession>Q9V0G1</accession>
<accession>G8ZH35</accession>
<dbReference type="EMBL" id="AJ248285">
    <property type="protein sequence ID" value="CAB49742.1"/>
    <property type="status" value="ALT_INIT"/>
    <property type="molecule type" value="Genomic_DNA"/>
</dbReference>
<dbReference type="EMBL" id="HE613800">
    <property type="protein sequence ID" value="CCE70230.1"/>
    <property type="molecule type" value="Genomic_DNA"/>
</dbReference>
<dbReference type="PIR" id="E75128">
    <property type="entry name" value="E75128"/>
</dbReference>
<dbReference type="RefSeq" id="WP_048146698.1">
    <property type="nucleotide sequence ID" value="NC_000868.1"/>
</dbReference>
<dbReference type="SMR" id="Q9V0G1"/>
<dbReference type="STRING" id="272844.PAB0559"/>
<dbReference type="KEGG" id="pab:PAB0559"/>
<dbReference type="PATRIC" id="fig|272844.11.peg.874"/>
<dbReference type="eggNOG" id="arCOG01303">
    <property type="taxonomic scope" value="Archaea"/>
</dbReference>
<dbReference type="HOGENOM" id="CLU_097408_2_2_2"/>
<dbReference type="OrthoDB" id="9810at2157"/>
<dbReference type="Proteomes" id="UP000000810">
    <property type="component" value="Chromosome"/>
</dbReference>
<dbReference type="Proteomes" id="UP000009139">
    <property type="component" value="Chromosome"/>
</dbReference>
<dbReference type="GO" id="GO:0005737">
    <property type="term" value="C:cytoplasm"/>
    <property type="evidence" value="ECO:0007669"/>
    <property type="project" value="TreeGrafter"/>
</dbReference>
<dbReference type="GO" id="GO:0005960">
    <property type="term" value="C:glycine cleavage complex"/>
    <property type="evidence" value="ECO:0007669"/>
    <property type="project" value="InterPro"/>
</dbReference>
<dbReference type="GO" id="GO:0019464">
    <property type="term" value="P:glycine decarboxylation via glycine cleavage system"/>
    <property type="evidence" value="ECO:0007669"/>
    <property type="project" value="UniProtKB-UniRule"/>
</dbReference>
<dbReference type="CDD" id="cd06848">
    <property type="entry name" value="GCS_H"/>
    <property type="match status" value="1"/>
</dbReference>
<dbReference type="Gene3D" id="2.40.50.100">
    <property type="match status" value="1"/>
</dbReference>
<dbReference type="HAMAP" id="MF_00272">
    <property type="entry name" value="GcvH"/>
    <property type="match status" value="1"/>
</dbReference>
<dbReference type="InterPro" id="IPR003016">
    <property type="entry name" value="2-oxoA_DH_lipoyl-BS"/>
</dbReference>
<dbReference type="InterPro" id="IPR000089">
    <property type="entry name" value="Biotin_lipoyl"/>
</dbReference>
<dbReference type="InterPro" id="IPR002930">
    <property type="entry name" value="GCV_H"/>
</dbReference>
<dbReference type="InterPro" id="IPR033753">
    <property type="entry name" value="GCV_H/Fam206"/>
</dbReference>
<dbReference type="InterPro" id="IPR017453">
    <property type="entry name" value="GCV_H_sub"/>
</dbReference>
<dbReference type="InterPro" id="IPR011053">
    <property type="entry name" value="Single_hybrid_motif"/>
</dbReference>
<dbReference type="NCBIfam" id="TIGR00527">
    <property type="entry name" value="gcvH"/>
    <property type="match status" value="1"/>
</dbReference>
<dbReference type="NCBIfam" id="NF002270">
    <property type="entry name" value="PRK01202.1"/>
    <property type="match status" value="1"/>
</dbReference>
<dbReference type="PANTHER" id="PTHR11715">
    <property type="entry name" value="GLYCINE CLEAVAGE SYSTEM H PROTEIN"/>
    <property type="match status" value="1"/>
</dbReference>
<dbReference type="PANTHER" id="PTHR11715:SF3">
    <property type="entry name" value="GLYCINE CLEAVAGE SYSTEM H PROTEIN-RELATED"/>
    <property type="match status" value="1"/>
</dbReference>
<dbReference type="Pfam" id="PF01597">
    <property type="entry name" value="GCV_H"/>
    <property type="match status" value="1"/>
</dbReference>
<dbReference type="SUPFAM" id="SSF51230">
    <property type="entry name" value="Single hybrid motif"/>
    <property type="match status" value="1"/>
</dbReference>
<dbReference type="PROSITE" id="PS50968">
    <property type="entry name" value="BIOTINYL_LIPOYL"/>
    <property type="match status" value="1"/>
</dbReference>
<dbReference type="PROSITE" id="PS00189">
    <property type="entry name" value="LIPOYL"/>
    <property type="match status" value="1"/>
</dbReference>
<name>GCSH_PYRAB</name>
<organism>
    <name type="scientific">Pyrococcus abyssi (strain GE5 / Orsay)</name>
    <dbReference type="NCBI Taxonomy" id="272844"/>
    <lineage>
        <taxon>Archaea</taxon>
        <taxon>Methanobacteriati</taxon>
        <taxon>Methanobacteriota</taxon>
        <taxon>Thermococci</taxon>
        <taxon>Thermococcales</taxon>
        <taxon>Thermococcaceae</taxon>
        <taxon>Pyrococcus</taxon>
    </lineage>
</organism>
<evidence type="ECO:0000255" key="1">
    <source>
        <dbReference type="HAMAP-Rule" id="MF_00272"/>
    </source>
</evidence>
<evidence type="ECO:0000255" key="2">
    <source>
        <dbReference type="PROSITE-ProRule" id="PRU01066"/>
    </source>
</evidence>
<evidence type="ECO:0000305" key="3"/>
<protein>
    <recommendedName>
        <fullName evidence="1">Probable glycine cleavage system H protein</fullName>
    </recommendedName>
</protein>
<comment type="function">
    <text evidence="1">The glycine cleavage system catalyzes the degradation of glycine. The H protein shuttles the methylamine group of glycine from the P protein to the T protein.</text>
</comment>
<comment type="cofactor">
    <cofactor evidence="1">
        <name>(R)-lipoate</name>
        <dbReference type="ChEBI" id="CHEBI:83088"/>
    </cofactor>
    <text evidence="1">Binds 1 lipoyl cofactor covalently.</text>
</comment>
<comment type="subunit">
    <text evidence="1">The glycine cleavage system is composed of four proteins: P, T, L and H.</text>
</comment>
<comment type="similarity">
    <text evidence="1">Belongs to the GcvH family.</text>
</comment>
<comment type="sequence caution" evidence="3">
    <conflict type="erroneous initiation">
        <sequence resource="EMBL-CDS" id="CAB49742"/>
    </conflict>
    <text>Extended N-terminus.</text>
</comment>
<feature type="chain" id="PRO_0000166275" description="Probable glycine cleavage system H protein">
    <location>
        <begin position="1"/>
        <end position="134"/>
    </location>
</feature>
<feature type="domain" description="Lipoyl-binding" evidence="2">
    <location>
        <begin position="29"/>
        <end position="110"/>
    </location>
</feature>
<feature type="modified residue" description="N6-lipoyllysine" evidence="1">
    <location>
        <position position="70"/>
    </location>
</feature>
<sequence>MIEVGEYKVKEGLYYTKEHEWAQVLEDGTVLVGITDYAQKELGDIAYVELPEVGKEVKKGEVLCEVESVKAVSEVYAPVSGEVIEVNEELSDSPEKINEDPYGAWIAKIKPNNLEEELKELMDAEKYAEFLKSL</sequence>
<gene>
    <name evidence="1" type="primary">gcvH</name>
    <name type="synonym">gcsH4</name>
    <name type="ordered locus">PYRAB08280</name>
    <name type="ORF">PAB0559</name>
</gene>
<proteinExistence type="inferred from homology"/>